<gene>
    <name type="ordered locus">tll2306</name>
</gene>
<name>Y2306_THEVB</name>
<protein>
    <recommendedName>
        <fullName evidence="1">UPF0284 protein tll2306</fullName>
    </recommendedName>
</protein>
<organism>
    <name type="scientific">Thermosynechococcus vestitus (strain NIES-2133 / IAM M-273 / BP-1)</name>
    <dbReference type="NCBI Taxonomy" id="197221"/>
    <lineage>
        <taxon>Bacteria</taxon>
        <taxon>Bacillati</taxon>
        <taxon>Cyanobacteriota</taxon>
        <taxon>Cyanophyceae</taxon>
        <taxon>Acaryochloridales</taxon>
        <taxon>Thermosynechococcaceae</taxon>
        <taxon>Thermosynechococcus</taxon>
    </lineage>
</organism>
<sequence length="371" mass="39740">MVGNCQSVPMIGVATGAAIAGAWSDRHRQPPTFPALVCVLGFTETALIPGISAAGQTPSDRQITALADGEFLLRGIQPQYHYALPPLTAGASPALISRALIEALALPLYVFDAGLPLPRLPEMIDLGGTPARCLTTGQAMTPQMVAHLWEQGWSWGAKLSSQYPWLIIAECVVGGTTTALALCESLGIPARDCVGSSHRQSNHTQKWSLVQKGLAHLPPQADPFTCVAAIGDPMQVVVAAMALRASQTCGVLLAGGSQMIAVYAFGRAIAQWRQLPWRPEQIVVGTTRWLIEDQTAQIHRLAERVQCPLIYTQLDFSLSRHPALRAYEQGFVKEGVGAGGCAIAGHLLAGWRNSEMVDIVDRLADRWAKGM</sequence>
<keyword id="KW-1185">Reference proteome</keyword>
<dbReference type="EMBL" id="BA000039">
    <property type="protein sequence ID" value="BAC09858.1"/>
    <property type="molecule type" value="Genomic_DNA"/>
</dbReference>
<dbReference type="RefSeq" id="NP_683096.1">
    <property type="nucleotide sequence ID" value="NC_004113.1"/>
</dbReference>
<dbReference type="SMR" id="Q8DGL0"/>
<dbReference type="STRING" id="197221.gene:10748924"/>
<dbReference type="EnsemblBacteria" id="BAC09858">
    <property type="protein sequence ID" value="BAC09858"/>
    <property type="gene ID" value="BAC09858"/>
</dbReference>
<dbReference type="KEGG" id="tel:tll2306"/>
<dbReference type="PATRIC" id="fig|197221.4.peg.2415"/>
<dbReference type="eggNOG" id="COG2038">
    <property type="taxonomic scope" value="Bacteria"/>
</dbReference>
<dbReference type="Proteomes" id="UP000000440">
    <property type="component" value="Chromosome"/>
</dbReference>
<dbReference type="GO" id="GO:0008939">
    <property type="term" value="F:nicotinate-nucleotide-dimethylbenzimidazole phosphoribosyltransferase activity"/>
    <property type="evidence" value="ECO:0007669"/>
    <property type="project" value="InterPro"/>
</dbReference>
<dbReference type="CDD" id="cd02439">
    <property type="entry name" value="DMB-PRT_CobT"/>
    <property type="match status" value="1"/>
</dbReference>
<dbReference type="Gene3D" id="3.40.50.10210">
    <property type="match status" value="1"/>
</dbReference>
<dbReference type="HAMAP" id="MF_01086">
    <property type="entry name" value="UPF0284"/>
    <property type="match status" value="1"/>
</dbReference>
<dbReference type="InterPro" id="IPR003200">
    <property type="entry name" value="Nict_dMeBzImd_PRibTrfase"/>
</dbReference>
<dbReference type="InterPro" id="IPR002805">
    <property type="entry name" value="Nict_dMeBzImd_PRibTrfase_arc"/>
</dbReference>
<dbReference type="InterPro" id="IPR036087">
    <property type="entry name" value="Nict_dMeBzImd_PRibTrfase_sf"/>
</dbReference>
<dbReference type="NCBIfam" id="TIGR00303">
    <property type="entry name" value="nicotinate mononucleotide-dependent phosphoribosyltransferase CobT"/>
    <property type="match status" value="1"/>
</dbReference>
<dbReference type="NCBIfam" id="NF003373">
    <property type="entry name" value="PRK04447.1-6"/>
    <property type="match status" value="1"/>
</dbReference>
<dbReference type="PANTHER" id="PTHR38811">
    <property type="match status" value="1"/>
</dbReference>
<dbReference type="PANTHER" id="PTHR38811:SF1">
    <property type="entry name" value="UPF0284 PROTEIN SLL1500"/>
    <property type="match status" value="1"/>
</dbReference>
<dbReference type="Pfam" id="PF02277">
    <property type="entry name" value="DBI_PRT"/>
    <property type="match status" value="1"/>
</dbReference>
<dbReference type="SUPFAM" id="SSF52733">
    <property type="entry name" value="Nicotinate mononucleotide:5,6-dimethylbenzimidazole phosphoribosyltransferase (CobT)"/>
    <property type="match status" value="1"/>
</dbReference>
<proteinExistence type="inferred from homology"/>
<evidence type="ECO:0000255" key="1">
    <source>
        <dbReference type="HAMAP-Rule" id="MF_01086"/>
    </source>
</evidence>
<feature type="chain" id="PRO_0000151044" description="UPF0284 protein tll2306">
    <location>
        <begin position="1"/>
        <end position="371"/>
    </location>
</feature>
<reference key="1">
    <citation type="journal article" date="2002" name="DNA Res.">
        <title>Complete genome structure of the thermophilic cyanobacterium Thermosynechococcus elongatus BP-1.</title>
        <authorList>
            <person name="Nakamura Y."/>
            <person name="Kaneko T."/>
            <person name="Sato S."/>
            <person name="Ikeuchi M."/>
            <person name="Katoh H."/>
            <person name="Sasamoto S."/>
            <person name="Watanabe A."/>
            <person name="Iriguchi M."/>
            <person name="Kawashima K."/>
            <person name="Kimura T."/>
            <person name="Kishida Y."/>
            <person name="Kiyokawa C."/>
            <person name="Kohara M."/>
            <person name="Matsumoto M."/>
            <person name="Matsuno A."/>
            <person name="Nakazaki N."/>
            <person name="Shimpo S."/>
            <person name="Sugimoto M."/>
            <person name="Takeuchi C."/>
            <person name="Yamada M."/>
            <person name="Tabata S."/>
        </authorList>
    </citation>
    <scope>NUCLEOTIDE SEQUENCE [LARGE SCALE GENOMIC DNA]</scope>
    <source>
        <strain>NIES-2133 / IAM M-273 / BP-1</strain>
    </source>
</reference>
<comment type="similarity">
    <text evidence="1">Belongs to the UPF0284 family.</text>
</comment>
<accession>Q8DGL0</accession>